<sequence length="276" mass="30605">MKQQILQEMRVLVTINEEIEIKRRINFIKKKLQQAECYTLVLGISGGVDSSTAGRLCQLAVEQLNQSTDTDKYQFIAVRLPYAIQKDEDEAQLALQFIRPSHVITINIKNGADGIHESTLAALQTSSVNLSADTNIDFIKGNVKARMRMIAQYEIAGLTGGLVVGTDHSAENITGFYTKHGDGACDLAPLFGLNKRQIRALAKQLGAPAILIEKAPTADLEEDKPQLQDEHALGITYDQIDDFLEGKAVTQEIEDKLIAIYLRTQHKRQAVPTIYD</sequence>
<protein>
    <recommendedName>
        <fullName evidence="1">NH(3)-dependent NAD(+) synthetase</fullName>
        <ecNumber evidence="1">6.3.1.5</ecNumber>
    </recommendedName>
</protein>
<proteinExistence type="inferred from homology"/>
<comment type="function">
    <text evidence="1">Catalyzes the ATP-dependent amidation of deamido-NAD to form NAD. Uses ammonia as a nitrogen source.</text>
</comment>
<comment type="catalytic activity">
    <reaction evidence="1">
        <text>deamido-NAD(+) + NH4(+) + ATP = AMP + diphosphate + NAD(+) + H(+)</text>
        <dbReference type="Rhea" id="RHEA:21188"/>
        <dbReference type="ChEBI" id="CHEBI:15378"/>
        <dbReference type="ChEBI" id="CHEBI:28938"/>
        <dbReference type="ChEBI" id="CHEBI:30616"/>
        <dbReference type="ChEBI" id="CHEBI:33019"/>
        <dbReference type="ChEBI" id="CHEBI:57540"/>
        <dbReference type="ChEBI" id="CHEBI:58437"/>
        <dbReference type="ChEBI" id="CHEBI:456215"/>
        <dbReference type="EC" id="6.3.1.5"/>
    </reaction>
</comment>
<comment type="pathway">
    <text evidence="1">Cofactor biosynthesis; NAD(+) biosynthesis; NAD(+) from deamido-NAD(+) (ammonia route): step 1/1.</text>
</comment>
<comment type="subunit">
    <text evidence="1">Homodimer.</text>
</comment>
<comment type="similarity">
    <text evidence="1">Belongs to the NAD synthetase family.</text>
</comment>
<gene>
    <name evidence="1" type="primary">nadE</name>
    <name type="ordered locus">Ping_3205</name>
</gene>
<evidence type="ECO:0000255" key="1">
    <source>
        <dbReference type="HAMAP-Rule" id="MF_00193"/>
    </source>
</evidence>
<organism>
    <name type="scientific">Psychromonas ingrahamii (strain DSM 17664 / CCUG 51855 / 37)</name>
    <dbReference type="NCBI Taxonomy" id="357804"/>
    <lineage>
        <taxon>Bacteria</taxon>
        <taxon>Pseudomonadati</taxon>
        <taxon>Pseudomonadota</taxon>
        <taxon>Gammaproteobacteria</taxon>
        <taxon>Alteromonadales</taxon>
        <taxon>Psychromonadaceae</taxon>
        <taxon>Psychromonas</taxon>
    </lineage>
</organism>
<dbReference type="EC" id="6.3.1.5" evidence="1"/>
<dbReference type="EMBL" id="CP000510">
    <property type="protein sequence ID" value="ABM04892.1"/>
    <property type="molecule type" value="Genomic_DNA"/>
</dbReference>
<dbReference type="RefSeq" id="WP_011771444.1">
    <property type="nucleotide sequence ID" value="NC_008709.1"/>
</dbReference>
<dbReference type="SMR" id="A1SZH7"/>
<dbReference type="STRING" id="357804.Ping_3205"/>
<dbReference type="KEGG" id="pin:Ping_3205"/>
<dbReference type="eggNOG" id="COG0171">
    <property type="taxonomic scope" value="Bacteria"/>
</dbReference>
<dbReference type="HOGENOM" id="CLU_059327_3_0_6"/>
<dbReference type="OrthoDB" id="3266517at2"/>
<dbReference type="UniPathway" id="UPA00253">
    <property type="reaction ID" value="UER00333"/>
</dbReference>
<dbReference type="Proteomes" id="UP000000639">
    <property type="component" value="Chromosome"/>
</dbReference>
<dbReference type="GO" id="GO:0005737">
    <property type="term" value="C:cytoplasm"/>
    <property type="evidence" value="ECO:0007669"/>
    <property type="project" value="InterPro"/>
</dbReference>
<dbReference type="GO" id="GO:0005524">
    <property type="term" value="F:ATP binding"/>
    <property type="evidence" value="ECO:0007669"/>
    <property type="project" value="UniProtKB-UniRule"/>
</dbReference>
<dbReference type="GO" id="GO:0004359">
    <property type="term" value="F:glutaminase activity"/>
    <property type="evidence" value="ECO:0007669"/>
    <property type="project" value="InterPro"/>
</dbReference>
<dbReference type="GO" id="GO:0046872">
    <property type="term" value="F:metal ion binding"/>
    <property type="evidence" value="ECO:0007669"/>
    <property type="project" value="UniProtKB-KW"/>
</dbReference>
<dbReference type="GO" id="GO:0003952">
    <property type="term" value="F:NAD+ synthase (glutamine-hydrolyzing) activity"/>
    <property type="evidence" value="ECO:0007669"/>
    <property type="project" value="InterPro"/>
</dbReference>
<dbReference type="GO" id="GO:0008795">
    <property type="term" value="F:NAD+ synthase activity"/>
    <property type="evidence" value="ECO:0007669"/>
    <property type="project" value="UniProtKB-UniRule"/>
</dbReference>
<dbReference type="GO" id="GO:0009435">
    <property type="term" value="P:NAD biosynthetic process"/>
    <property type="evidence" value="ECO:0007669"/>
    <property type="project" value="UniProtKB-UniRule"/>
</dbReference>
<dbReference type="CDD" id="cd00553">
    <property type="entry name" value="NAD_synthase"/>
    <property type="match status" value="1"/>
</dbReference>
<dbReference type="FunFam" id="3.40.50.620:FF:000015">
    <property type="entry name" value="NH(3)-dependent NAD(+) synthetase"/>
    <property type="match status" value="1"/>
</dbReference>
<dbReference type="Gene3D" id="3.40.50.620">
    <property type="entry name" value="HUPs"/>
    <property type="match status" value="1"/>
</dbReference>
<dbReference type="HAMAP" id="MF_00193">
    <property type="entry name" value="NadE_ammonia_dep"/>
    <property type="match status" value="1"/>
</dbReference>
<dbReference type="InterPro" id="IPR022310">
    <property type="entry name" value="NAD/GMP_synthase"/>
</dbReference>
<dbReference type="InterPro" id="IPR003694">
    <property type="entry name" value="NAD_synthase"/>
</dbReference>
<dbReference type="InterPro" id="IPR022926">
    <property type="entry name" value="NH(3)-dep_NAD(+)_synth"/>
</dbReference>
<dbReference type="InterPro" id="IPR014729">
    <property type="entry name" value="Rossmann-like_a/b/a_fold"/>
</dbReference>
<dbReference type="NCBIfam" id="TIGR00552">
    <property type="entry name" value="nadE"/>
    <property type="match status" value="1"/>
</dbReference>
<dbReference type="NCBIfam" id="NF001979">
    <property type="entry name" value="PRK00768.1"/>
    <property type="match status" value="1"/>
</dbReference>
<dbReference type="PANTHER" id="PTHR23090">
    <property type="entry name" value="NH 3 /GLUTAMINE-DEPENDENT NAD + SYNTHETASE"/>
    <property type="match status" value="1"/>
</dbReference>
<dbReference type="PANTHER" id="PTHR23090:SF7">
    <property type="entry name" value="NH(3)-DEPENDENT NAD(+) SYNTHETASE"/>
    <property type="match status" value="1"/>
</dbReference>
<dbReference type="Pfam" id="PF02540">
    <property type="entry name" value="NAD_synthase"/>
    <property type="match status" value="1"/>
</dbReference>
<dbReference type="SUPFAM" id="SSF52402">
    <property type="entry name" value="Adenine nucleotide alpha hydrolases-like"/>
    <property type="match status" value="1"/>
</dbReference>
<reference key="1">
    <citation type="journal article" date="2008" name="BMC Genomics">
        <title>Genomics of an extreme psychrophile, Psychromonas ingrahamii.</title>
        <authorList>
            <person name="Riley M."/>
            <person name="Staley J.T."/>
            <person name="Danchin A."/>
            <person name="Wang T.Z."/>
            <person name="Brettin T.S."/>
            <person name="Hauser L.J."/>
            <person name="Land M.L."/>
            <person name="Thompson L.S."/>
        </authorList>
    </citation>
    <scope>NUCLEOTIDE SEQUENCE [LARGE SCALE GENOMIC DNA]</scope>
    <source>
        <strain>DSM 17664 / CCUG 51855 / 37</strain>
    </source>
</reference>
<keyword id="KW-0067">ATP-binding</keyword>
<keyword id="KW-0436">Ligase</keyword>
<keyword id="KW-0460">Magnesium</keyword>
<keyword id="KW-0479">Metal-binding</keyword>
<keyword id="KW-0520">NAD</keyword>
<keyword id="KW-0547">Nucleotide-binding</keyword>
<keyword id="KW-1185">Reference proteome</keyword>
<feature type="chain" id="PRO_1000077591" description="NH(3)-dependent NAD(+) synthetase">
    <location>
        <begin position="1"/>
        <end position="276"/>
    </location>
</feature>
<feature type="binding site" evidence="1">
    <location>
        <begin position="43"/>
        <end position="50"/>
    </location>
    <ligand>
        <name>ATP</name>
        <dbReference type="ChEBI" id="CHEBI:30616"/>
    </ligand>
</feature>
<feature type="binding site" evidence="1">
    <location>
        <position position="49"/>
    </location>
    <ligand>
        <name>Mg(2+)</name>
        <dbReference type="ChEBI" id="CHEBI:18420"/>
    </ligand>
</feature>
<feature type="binding site" evidence="1">
    <location>
        <position position="146"/>
    </location>
    <ligand>
        <name>deamido-NAD(+)</name>
        <dbReference type="ChEBI" id="CHEBI:58437"/>
    </ligand>
</feature>
<feature type="binding site" evidence="1">
    <location>
        <position position="166"/>
    </location>
    <ligand>
        <name>ATP</name>
        <dbReference type="ChEBI" id="CHEBI:30616"/>
    </ligand>
</feature>
<feature type="binding site" evidence="1">
    <location>
        <position position="171"/>
    </location>
    <ligand>
        <name>Mg(2+)</name>
        <dbReference type="ChEBI" id="CHEBI:18420"/>
    </ligand>
</feature>
<feature type="binding site" evidence="1">
    <location>
        <position position="179"/>
    </location>
    <ligand>
        <name>deamido-NAD(+)</name>
        <dbReference type="ChEBI" id="CHEBI:58437"/>
    </ligand>
</feature>
<feature type="binding site" evidence="1">
    <location>
        <position position="186"/>
    </location>
    <ligand>
        <name>deamido-NAD(+)</name>
        <dbReference type="ChEBI" id="CHEBI:58437"/>
    </ligand>
</feature>
<feature type="binding site" evidence="1">
    <location>
        <position position="195"/>
    </location>
    <ligand>
        <name>ATP</name>
        <dbReference type="ChEBI" id="CHEBI:30616"/>
    </ligand>
</feature>
<feature type="binding site" evidence="1">
    <location>
        <position position="217"/>
    </location>
    <ligand>
        <name>ATP</name>
        <dbReference type="ChEBI" id="CHEBI:30616"/>
    </ligand>
</feature>
<feature type="binding site" evidence="1">
    <location>
        <begin position="266"/>
        <end position="267"/>
    </location>
    <ligand>
        <name>deamido-NAD(+)</name>
        <dbReference type="ChEBI" id="CHEBI:58437"/>
    </ligand>
</feature>
<name>NADE_PSYIN</name>
<accession>A1SZH7</accession>